<reference key="1">
    <citation type="journal article" date="1995" name="J. Biochem.">
        <title>Isolation and expression of a chicken DNA methyltransferase cDNA.</title>
        <authorList>
            <person name="Tajima S."/>
            <person name="Tsuda H."/>
            <person name="Wakabayashi N."/>
            <person name="Asaso A."/>
            <person name="Mizuno S."/>
            <person name="Nishimori K."/>
        </authorList>
    </citation>
    <scope>NUCLEOTIDE SEQUENCE [MRNA]</scope>
</reference>
<reference key="2">
    <citation type="journal article" date="1997" name="Science">
        <title>Human DNA-(cytosine-5) methyltransferase-PCNA complex as a target for p21WAF1.</title>
        <authorList>
            <person name="Chuang L.S.-H."/>
            <person name="Ian H.-I."/>
            <person name="Koh T.-W."/>
            <person name="Ng H.-H."/>
            <person name="Xu G."/>
            <person name="Li B.F.L."/>
        </authorList>
    </citation>
    <scope>INTERACTION WITH PCNA</scope>
    <scope>MUTAGENESIS OF VAL-190</scope>
</reference>
<feature type="chain" id="PRO_0000088037" description="DNA (cytosine-5)-methyltransferase 1">
    <location>
        <begin position="1"/>
        <end position="1537"/>
    </location>
</feature>
<feature type="domain" description="DMAP1-binding" evidence="7">
    <location>
        <begin position="8"/>
        <end position="105"/>
    </location>
</feature>
<feature type="domain" description="BAH 1" evidence="4">
    <location>
        <begin position="667"/>
        <end position="791"/>
    </location>
</feature>
<feature type="domain" description="BAH 2" evidence="4">
    <location>
        <begin position="883"/>
        <end position="1011"/>
    </location>
</feature>
<feature type="repeat" description="1">
    <location>
        <begin position="1020"/>
        <end position="1021"/>
    </location>
</feature>
<feature type="repeat" description="2">
    <location>
        <begin position="1022"/>
        <end position="1023"/>
    </location>
</feature>
<feature type="repeat" description="3">
    <location>
        <begin position="1024"/>
        <end position="1025"/>
    </location>
</feature>
<feature type="repeat" description="4">
    <location>
        <begin position="1026"/>
        <end position="1027"/>
    </location>
</feature>
<feature type="repeat" description="5">
    <location>
        <begin position="1028"/>
        <end position="1029"/>
    </location>
</feature>
<feature type="repeat" description="6">
    <location>
        <begin position="1030"/>
        <end position="1031"/>
    </location>
</feature>
<feature type="repeat" description="7">
    <location>
        <begin position="1032"/>
        <end position="1033"/>
    </location>
</feature>
<feature type="repeat" description="8; approximate">
    <location>
        <begin position="1034"/>
        <end position="1035"/>
    </location>
</feature>
<feature type="domain" description="SAM-dependent MTase C5-type" evidence="6">
    <location>
        <begin position="1054"/>
        <end position="1513"/>
    </location>
</feature>
<feature type="zinc finger region" description="CXXC-type" evidence="5">
    <location>
        <begin position="558"/>
        <end position="604"/>
    </location>
</feature>
<feature type="region of interest" description="Disordered" evidence="9">
    <location>
        <begin position="1"/>
        <end position="34"/>
    </location>
</feature>
<feature type="region of interest" description="Disordered" evidence="9">
    <location>
        <begin position="97"/>
        <end position="232"/>
    </location>
</feature>
<feature type="region of interest" description="Interaction with PCNA" evidence="10">
    <location>
        <begin position="182"/>
        <end position="194"/>
    </location>
</feature>
<feature type="region of interest" description="Disordered" evidence="9">
    <location>
        <begin position="614"/>
        <end position="638"/>
    </location>
</feature>
<feature type="region of interest" description="Disordered" evidence="9">
    <location>
        <begin position="1006"/>
        <end position="1050"/>
    </location>
</feature>
<feature type="region of interest" description="8 X 2 AA tandem repeats of K-G">
    <location>
        <begin position="1020"/>
        <end position="1035"/>
    </location>
</feature>
<feature type="region of interest" description="Disordered" evidence="9">
    <location>
        <begin position="1518"/>
        <end position="1537"/>
    </location>
</feature>
<feature type="compositionally biased region" description="Pro residues" evidence="9">
    <location>
        <begin position="1"/>
        <end position="13"/>
    </location>
</feature>
<feature type="compositionally biased region" description="Basic and acidic residues" evidence="9">
    <location>
        <begin position="21"/>
        <end position="34"/>
    </location>
</feature>
<feature type="compositionally biased region" description="Low complexity" evidence="9">
    <location>
        <begin position="129"/>
        <end position="154"/>
    </location>
</feature>
<feature type="compositionally biased region" description="Polar residues" evidence="9">
    <location>
        <begin position="171"/>
        <end position="194"/>
    </location>
</feature>
<feature type="compositionally biased region" description="Acidic residues" evidence="9">
    <location>
        <begin position="215"/>
        <end position="227"/>
    </location>
</feature>
<feature type="compositionally biased region" description="Basic residues" evidence="9">
    <location>
        <begin position="1021"/>
        <end position="1033"/>
    </location>
</feature>
<feature type="active site" evidence="6 8">
    <location>
        <position position="1141"/>
    </location>
</feature>
<feature type="binding site" evidence="1">
    <location>
        <position position="263"/>
    </location>
    <ligand>
        <name>Zn(2+)</name>
        <dbReference type="ChEBI" id="CHEBI:29105"/>
    </ligand>
</feature>
<feature type="binding site" evidence="1">
    <location>
        <position position="266"/>
    </location>
    <ligand>
        <name>Zn(2+)</name>
        <dbReference type="ChEBI" id="CHEBI:29105"/>
    </ligand>
</feature>
<feature type="binding site" evidence="1">
    <location>
        <position position="329"/>
    </location>
    <ligand>
        <name>Zn(2+)</name>
        <dbReference type="ChEBI" id="CHEBI:29105"/>
    </ligand>
</feature>
<feature type="binding site" evidence="5">
    <location>
        <position position="565"/>
    </location>
    <ligand>
        <name>Zn(2+)</name>
        <dbReference type="ChEBI" id="CHEBI:29105"/>
        <label>1</label>
    </ligand>
</feature>
<feature type="binding site" evidence="5">
    <location>
        <position position="568"/>
    </location>
    <ligand>
        <name>Zn(2+)</name>
        <dbReference type="ChEBI" id="CHEBI:29105"/>
        <label>1</label>
    </ligand>
</feature>
<feature type="binding site" evidence="5">
    <location>
        <position position="571"/>
    </location>
    <ligand>
        <name>Zn(2+)</name>
        <dbReference type="ChEBI" id="CHEBI:29105"/>
        <label>1</label>
    </ligand>
</feature>
<feature type="binding site" evidence="5">
    <location>
        <position position="576"/>
    </location>
    <ligand>
        <name>Zn(2+)</name>
        <dbReference type="ChEBI" id="CHEBI:29105"/>
        <label>2</label>
    </ligand>
</feature>
<feature type="binding site" evidence="5">
    <location>
        <position position="579"/>
    </location>
    <ligand>
        <name>Zn(2+)</name>
        <dbReference type="ChEBI" id="CHEBI:29105"/>
        <label>2</label>
    </ligand>
</feature>
<feature type="binding site" evidence="5">
    <location>
        <position position="582"/>
    </location>
    <ligand>
        <name>Zn(2+)</name>
        <dbReference type="ChEBI" id="CHEBI:29105"/>
        <label>2</label>
    </ligand>
</feature>
<feature type="binding site" evidence="5">
    <location>
        <position position="598"/>
    </location>
    <ligand>
        <name>Zn(2+)</name>
        <dbReference type="ChEBI" id="CHEBI:29105"/>
        <label>2</label>
    </ligand>
</feature>
<feature type="binding site" evidence="5">
    <location>
        <position position="603"/>
    </location>
    <ligand>
        <name>Zn(2+)</name>
        <dbReference type="ChEBI" id="CHEBI:29105"/>
        <label>1</label>
    </ligand>
</feature>
<feature type="binding site" evidence="2">
    <location>
        <position position="1061"/>
    </location>
    <ligand>
        <name>S-adenosyl-L-methionine</name>
        <dbReference type="ChEBI" id="CHEBI:59789"/>
    </ligand>
</feature>
<feature type="binding site" evidence="2">
    <location>
        <begin position="1065"/>
        <end position="1066"/>
    </location>
    <ligand>
        <name>S-adenosyl-L-methionine</name>
        <dbReference type="ChEBI" id="CHEBI:59789"/>
    </ligand>
</feature>
<feature type="binding site" evidence="3">
    <location>
        <begin position="1083"/>
        <end position="1084"/>
    </location>
    <ligand>
        <name>S-adenosyl-L-methionine</name>
        <dbReference type="ChEBI" id="CHEBI:59789"/>
    </ligand>
</feature>
<feature type="binding site" evidence="2">
    <location>
        <begin position="1105"/>
        <end position="1106"/>
    </location>
    <ligand>
        <name>S-adenosyl-L-methionine</name>
        <dbReference type="ChEBI" id="CHEBI:59789"/>
    </ligand>
</feature>
<feature type="binding site" evidence="3">
    <location>
        <position position="1106"/>
    </location>
    <ligand>
        <name>S-adenosyl-L-methionine</name>
        <dbReference type="ChEBI" id="CHEBI:59789"/>
    </ligand>
</feature>
<feature type="binding site" evidence="3">
    <location>
        <position position="1492"/>
    </location>
    <ligand>
        <name>S-adenosyl-L-methionine</name>
        <dbReference type="ChEBI" id="CHEBI:59789"/>
    </ligand>
</feature>
<feature type="binding site" evidence="2">
    <location>
        <position position="1494"/>
    </location>
    <ligand>
        <name>S-adenosyl-L-methionine</name>
        <dbReference type="ChEBI" id="CHEBI:59789"/>
    </ligand>
</feature>
<feature type="site" description="Important for activity" evidence="1">
    <location>
        <position position="420"/>
    </location>
</feature>
<feature type="modified residue" description="Phosphoserine" evidence="1">
    <location>
        <position position="420"/>
    </location>
</feature>
<feature type="mutagenesis site" description="No loss of interaction with PCNA." evidence="10">
    <original>V</original>
    <variation>H</variation>
    <location>
        <position position="190"/>
    </location>
</feature>
<sequence>MPARSAPPPPALPPALRRRLRDLERDEDSLSEKETLQEKLRLTRGFLRAEVQRRLSALDADVRCRELSEERYLAKVKALLRRELAAENGDAAKLFSRASNGCAGNGEEEWERGGRGEDGAMEVEEAAASSSSSSSSSSSSSSSSSSSSSLLPAPRARKARRSRSNGESKKSPASSRVTRSSGRQPTILSVFSKGSTKRKSEEVNGAVKPEVSAEKDEEEEEELEEKEQDEKRIKIETKEGSEIKDEITQVKTSTPAKTTPPKCVDCRQYLDDPDLKFFQGDPDDALEEPEMLTDERLSIFDANEDGFESYEDLPQHKVTSFSVYDKRGHLCPFDTGLIERNIELYFSGAVKPIYDDNPCLDGGVRAKKLGPINAWWITGFDGGEKALIGFTTAFADYILMEPSEEYAPIFALMQEKIYMSKIVVEFLQNNRDVSYEDLLNKIETTVPPVGLNFNRFTEDSLLRHAQFVVEQVESYDEAGDSDEPPVLITPCMRDLIKLAGVTLGKRRAVRRQAIRHPTRIDKDKGPTKATTTKLVYLIFDTFFSEQIEKDEREDDKENAMKRRRCGVCEVCQQPECGKCKACQNMVKFGGSGRSKQACLQRRCPNLAVREADEDEEVDDNIPEMPSPKKMLQGRKKKQNKSRISWVGEPIKSDGKKDFYQRVCIDSETLEVGDCVSVSPDDPTKPLYLARVTAMWEDSSGQMFHAHWFCPGSDTVLGATSDPLELFLVDECEDMQLSYIHGKVNVIYKPPSENWAMEGGLDMEIKMVEDDGRTYFYQMWYDQEYARFETPPRAQPMEDNKYKFCLSCARLDEVRHKEIPKVAEPLDEGDGKMFYAMATKNGVQYRVGDSVYLLPEAFSFSMKPASPAKRPKKEAVDEDLYPEHYRKYSEYIKGSNLDAPDPYRVGRIKEIFCHIRTNGKPNEADIKLRIWKFYRPENTHKSMKATYHADINLLYWSDEETTVDFCAVQGRCTVVYGEDLTESIQDYSAGGLDRFYFLEAYNAKTKSFEDPPNHARSSGNKGKGKGKGKGKGKGKSSTTCEQSEPEPTELKLPKLRTLDVFSGCGGLSEGFHQAGVSETLWAIEMWEPAAQAFRLNNPGTTVFTEDCNVLLKLVMSGEKTNSLGQKLPQKGDVEMLCGGPPCQGFSGMNRFNSRTYSKFKNSLVVSFLSYCDYYRPRFFLLENVRNFVSFKRSMVLKLTLRCLVRMGYQCTFGVLQAGQYGVAQTRRRAIVLAAAPGEKLPMFPEPLHVFAPRACQLSVVVDDKKFVSNITRTYSGPFRTITVRDTMSDLPEIRNGASALEISYNGEPQSWFQRQIRGSQYQPILRDHICKDMSALVAARMRHIPLAPGSDWRDLPNIEVRLSDGTSTRKLRYTHHEKKNGRSSSGALRGVCSCAEGKPCDPADRQFNTLIPWCLPHTGNRHNHWAGLYGRLEWDGFFSTTVTNPEPMGKQGRVLHPEQHRVVSVRECARSQGFPDTYRLFGNILDKHRQVGNAVPPPLAKAIGLEIRACVGARMREESGAAVAPPAPEKMEMTAAAD</sequence>
<proteinExistence type="evidence at protein level"/>
<comment type="function">
    <text evidence="2 3">Methylates CpG residues. Preferentially methylates hemimethylated DNA. It is responsible for maintaining methylation patterns established in development. Mediates transcriptional repression by direct binding to HDAC2. Plays a role in promoter hypermethylation and transcriptional silencing of tumor suppressor genes (TSGs) or other tumor-related genes. Also required to maintain a transcriptionally repressive state of genes in undifferentiated embryonic stem cells (ESCs). Associates at promoter regions of tumor suppressor genes (TSGs) leading to their gene silencing.</text>
</comment>
<comment type="catalytic activity">
    <reaction evidence="8">
        <text>a 2'-deoxycytidine in DNA + S-adenosyl-L-methionine = a 5-methyl-2'-deoxycytidine in DNA + S-adenosyl-L-homocysteine + H(+)</text>
        <dbReference type="Rhea" id="RHEA:13681"/>
        <dbReference type="Rhea" id="RHEA-COMP:11369"/>
        <dbReference type="Rhea" id="RHEA-COMP:11370"/>
        <dbReference type="ChEBI" id="CHEBI:15378"/>
        <dbReference type="ChEBI" id="CHEBI:57856"/>
        <dbReference type="ChEBI" id="CHEBI:59789"/>
        <dbReference type="ChEBI" id="CHEBI:85452"/>
        <dbReference type="ChEBI" id="CHEBI:85454"/>
        <dbReference type="EC" id="2.1.1.37"/>
    </reaction>
</comment>
<comment type="subunit">
    <text evidence="3 10">Homodimer (By similarity). Interacts with PCNA (PubMed:9302295).</text>
</comment>
<comment type="subcellular location">
    <subcellularLocation>
        <location evidence="1">Nucleus</location>
    </subcellularLocation>
</comment>
<comment type="tissue specificity">
    <text>Testis and lung.</text>
</comment>
<comment type="similarity">
    <text evidence="6">Belongs to the class I-like SAM-binding methyltransferase superfamily. C5-methyltransferase family.</text>
</comment>
<gene>
    <name type="primary">DNMT1</name>
    <name type="synonym">AIM</name>
    <name type="synonym">DNMT</name>
</gene>
<evidence type="ECO:0000250" key="1"/>
<evidence type="ECO:0000250" key="2">
    <source>
        <dbReference type="UniProtKB" id="P13864"/>
    </source>
</evidence>
<evidence type="ECO:0000250" key="3">
    <source>
        <dbReference type="UniProtKB" id="P26358"/>
    </source>
</evidence>
<evidence type="ECO:0000255" key="4">
    <source>
        <dbReference type="PROSITE-ProRule" id="PRU00370"/>
    </source>
</evidence>
<evidence type="ECO:0000255" key="5">
    <source>
        <dbReference type="PROSITE-ProRule" id="PRU00509"/>
    </source>
</evidence>
<evidence type="ECO:0000255" key="6">
    <source>
        <dbReference type="PROSITE-ProRule" id="PRU01016"/>
    </source>
</evidence>
<evidence type="ECO:0000255" key="7">
    <source>
        <dbReference type="PROSITE-ProRule" id="PRU01260"/>
    </source>
</evidence>
<evidence type="ECO:0000255" key="8">
    <source>
        <dbReference type="PROSITE-ProRule" id="PRU10018"/>
    </source>
</evidence>
<evidence type="ECO:0000256" key="9">
    <source>
        <dbReference type="SAM" id="MobiDB-lite"/>
    </source>
</evidence>
<evidence type="ECO:0000269" key="10">
    <source>
    </source>
</evidence>
<accession>Q92072</accession>
<dbReference type="EC" id="2.1.1.37"/>
<dbReference type="EMBL" id="D43920">
    <property type="protein sequence ID" value="BAA07867.1"/>
    <property type="molecule type" value="mRNA"/>
</dbReference>
<dbReference type="PIR" id="JC4172">
    <property type="entry name" value="JC4172"/>
</dbReference>
<dbReference type="RefSeq" id="NP_996835.1">
    <property type="nucleotide sequence ID" value="NM_206952.1"/>
</dbReference>
<dbReference type="SMR" id="Q92072"/>
<dbReference type="FunCoup" id="Q92072">
    <property type="interactions" value="1342"/>
</dbReference>
<dbReference type="STRING" id="9031.ENSGALP00000056402"/>
<dbReference type="REBASE" id="3020">
    <property type="entry name" value="M.GgaDnmt1"/>
</dbReference>
<dbReference type="PaxDb" id="9031-ENSGALP00000043396"/>
<dbReference type="GeneID" id="396011"/>
<dbReference type="KEGG" id="gga:396011"/>
<dbReference type="CTD" id="1786"/>
<dbReference type="VEuPathDB" id="HostDB:geneid_396011"/>
<dbReference type="eggNOG" id="ENOG502QPKK">
    <property type="taxonomic scope" value="Eukaryota"/>
</dbReference>
<dbReference type="InParanoid" id="Q92072"/>
<dbReference type="OrthoDB" id="5376140at2759"/>
<dbReference type="PhylomeDB" id="Q92072"/>
<dbReference type="PRO" id="PR:Q92072"/>
<dbReference type="Proteomes" id="UP000000539">
    <property type="component" value="Unassembled WGS sequence"/>
</dbReference>
<dbReference type="GO" id="GO:0005634">
    <property type="term" value="C:nucleus"/>
    <property type="evidence" value="ECO:0000318"/>
    <property type="project" value="GO_Central"/>
</dbReference>
<dbReference type="GO" id="GO:0003886">
    <property type="term" value="F:DNA (cytosine-5-)-methyltransferase activity"/>
    <property type="evidence" value="ECO:0000318"/>
    <property type="project" value="GO_Central"/>
</dbReference>
<dbReference type="GO" id="GO:0003677">
    <property type="term" value="F:DNA binding"/>
    <property type="evidence" value="ECO:0000318"/>
    <property type="project" value="GO_Central"/>
</dbReference>
<dbReference type="GO" id="GO:1990841">
    <property type="term" value="F:promoter-specific chromatin binding"/>
    <property type="evidence" value="ECO:0000250"/>
    <property type="project" value="UniProtKB"/>
</dbReference>
<dbReference type="GO" id="GO:0008270">
    <property type="term" value="F:zinc ion binding"/>
    <property type="evidence" value="ECO:0007669"/>
    <property type="project" value="UniProtKB-KW"/>
</dbReference>
<dbReference type="GO" id="GO:0006346">
    <property type="term" value="P:DNA methylation-dependent constitutive heterochromatin formation"/>
    <property type="evidence" value="ECO:0007669"/>
    <property type="project" value="InterPro"/>
</dbReference>
<dbReference type="GO" id="GO:0032259">
    <property type="term" value="P:methylation"/>
    <property type="evidence" value="ECO:0007669"/>
    <property type="project" value="UniProtKB-KW"/>
</dbReference>
<dbReference type="GO" id="GO:0044027">
    <property type="term" value="P:negative regulation of gene expression via chromosomal CpG island methylation"/>
    <property type="evidence" value="ECO:0000318"/>
    <property type="project" value="GO_Central"/>
</dbReference>
<dbReference type="CDD" id="cd04760">
    <property type="entry name" value="BAH_Dnmt1_I"/>
    <property type="match status" value="1"/>
</dbReference>
<dbReference type="CDD" id="cd04711">
    <property type="entry name" value="BAH_Dnmt1_II"/>
    <property type="match status" value="1"/>
</dbReference>
<dbReference type="FunFam" id="1.10.10.2230:FF:000001">
    <property type="entry name" value="DNA (cytosine-5)-methyltransferase"/>
    <property type="match status" value="1"/>
</dbReference>
<dbReference type="FunFam" id="2.30.30.490:FF:000004">
    <property type="entry name" value="DNA (cytosine-5)-methyltransferase"/>
    <property type="match status" value="1"/>
</dbReference>
<dbReference type="FunFam" id="2.30.30.490:FF:000006">
    <property type="entry name" value="DNA (cytosine-5)-methyltransferase"/>
    <property type="match status" value="1"/>
</dbReference>
<dbReference type="FunFam" id="3.40.50.150:FF:000036">
    <property type="entry name" value="DNA (cytosine-5)-methyltransferase"/>
    <property type="match status" value="1"/>
</dbReference>
<dbReference type="FunFam" id="3.90.120.10:FF:000001">
    <property type="entry name" value="DNA (cytosine-5)-methyltransferase"/>
    <property type="match status" value="1"/>
</dbReference>
<dbReference type="Gene3D" id="1.10.10.2230">
    <property type="match status" value="1"/>
</dbReference>
<dbReference type="Gene3D" id="2.30.30.490">
    <property type="match status" value="2"/>
</dbReference>
<dbReference type="Gene3D" id="3.90.120.10">
    <property type="entry name" value="DNA Methylase, subunit A, domain 2"/>
    <property type="match status" value="1"/>
</dbReference>
<dbReference type="Gene3D" id="3.40.50.150">
    <property type="entry name" value="Vaccinia Virus protein VP39"/>
    <property type="match status" value="1"/>
</dbReference>
<dbReference type="InterPro" id="IPR001025">
    <property type="entry name" value="BAH_dom"/>
</dbReference>
<dbReference type="InterPro" id="IPR043151">
    <property type="entry name" value="BAH_sf"/>
</dbReference>
<dbReference type="InterPro" id="IPR050390">
    <property type="entry name" value="C5-Methyltransferase"/>
</dbReference>
<dbReference type="InterPro" id="IPR018117">
    <property type="entry name" value="C5_DNA_meth_AS"/>
</dbReference>
<dbReference type="InterPro" id="IPR001525">
    <property type="entry name" value="C5_MeTfrase"/>
</dbReference>
<dbReference type="InterPro" id="IPR031303">
    <property type="entry name" value="C5_meth_CS"/>
</dbReference>
<dbReference type="InterPro" id="IPR022702">
    <property type="entry name" value="Cytosine_MeTrfase1_RFD"/>
</dbReference>
<dbReference type="InterPro" id="IPR010506">
    <property type="entry name" value="DMAP1-bd"/>
</dbReference>
<dbReference type="InterPro" id="IPR017198">
    <property type="entry name" value="DNMT1-like"/>
</dbReference>
<dbReference type="InterPro" id="IPR029063">
    <property type="entry name" value="SAM-dependent_MTases_sf"/>
</dbReference>
<dbReference type="InterPro" id="IPR002857">
    <property type="entry name" value="Znf_CXXC"/>
</dbReference>
<dbReference type="PANTHER" id="PTHR10629">
    <property type="entry name" value="CYTOSINE-SPECIFIC METHYLTRANSFERASE"/>
    <property type="match status" value="1"/>
</dbReference>
<dbReference type="PANTHER" id="PTHR10629:SF52">
    <property type="entry name" value="DNA (CYTOSINE-5)-METHYLTRANSFERASE 1"/>
    <property type="match status" value="1"/>
</dbReference>
<dbReference type="Pfam" id="PF01426">
    <property type="entry name" value="BAH"/>
    <property type="match status" value="2"/>
</dbReference>
<dbReference type="Pfam" id="PF06464">
    <property type="entry name" value="DMAP_binding"/>
    <property type="match status" value="1"/>
</dbReference>
<dbReference type="Pfam" id="PF00145">
    <property type="entry name" value="DNA_methylase"/>
    <property type="match status" value="1"/>
</dbReference>
<dbReference type="Pfam" id="PF12047">
    <property type="entry name" value="DNMT1-RFD"/>
    <property type="match status" value="1"/>
</dbReference>
<dbReference type="Pfam" id="PF02008">
    <property type="entry name" value="zf-CXXC"/>
    <property type="match status" value="1"/>
</dbReference>
<dbReference type="PIRSF" id="PIRSF037404">
    <property type="entry name" value="DNMT1"/>
    <property type="match status" value="1"/>
</dbReference>
<dbReference type="PRINTS" id="PR00105">
    <property type="entry name" value="C5METTRFRASE"/>
</dbReference>
<dbReference type="SMART" id="SM00439">
    <property type="entry name" value="BAH"/>
    <property type="match status" value="2"/>
</dbReference>
<dbReference type="SUPFAM" id="SSF53335">
    <property type="entry name" value="S-adenosyl-L-methionine-dependent methyltransferases"/>
    <property type="match status" value="1"/>
</dbReference>
<dbReference type="PROSITE" id="PS51038">
    <property type="entry name" value="BAH"/>
    <property type="match status" value="2"/>
</dbReference>
<dbReference type="PROSITE" id="PS00094">
    <property type="entry name" value="C5_MTASE_1"/>
    <property type="match status" value="1"/>
</dbReference>
<dbReference type="PROSITE" id="PS00095">
    <property type="entry name" value="C5_MTASE_2"/>
    <property type="match status" value="1"/>
</dbReference>
<dbReference type="PROSITE" id="PS51912">
    <property type="entry name" value="DMAP1_BIND"/>
    <property type="match status" value="1"/>
</dbReference>
<dbReference type="PROSITE" id="PS51679">
    <property type="entry name" value="SAM_MT_C5"/>
    <property type="match status" value="1"/>
</dbReference>
<dbReference type="PROSITE" id="PS51058">
    <property type="entry name" value="ZF_CXXC"/>
    <property type="match status" value="1"/>
</dbReference>
<organism>
    <name type="scientific">Gallus gallus</name>
    <name type="common">Chicken</name>
    <dbReference type="NCBI Taxonomy" id="9031"/>
    <lineage>
        <taxon>Eukaryota</taxon>
        <taxon>Metazoa</taxon>
        <taxon>Chordata</taxon>
        <taxon>Craniata</taxon>
        <taxon>Vertebrata</taxon>
        <taxon>Euteleostomi</taxon>
        <taxon>Archelosauria</taxon>
        <taxon>Archosauria</taxon>
        <taxon>Dinosauria</taxon>
        <taxon>Saurischia</taxon>
        <taxon>Theropoda</taxon>
        <taxon>Coelurosauria</taxon>
        <taxon>Aves</taxon>
        <taxon>Neognathae</taxon>
        <taxon>Galloanserae</taxon>
        <taxon>Galliformes</taxon>
        <taxon>Phasianidae</taxon>
        <taxon>Phasianinae</taxon>
        <taxon>Gallus</taxon>
    </lineage>
</organism>
<name>DNMT1_CHICK</name>
<keyword id="KW-0238">DNA-binding</keyword>
<keyword id="KW-0479">Metal-binding</keyword>
<keyword id="KW-0489">Methyltransferase</keyword>
<keyword id="KW-0539">Nucleus</keyword>
<keyword id="KW-0597">Phosphoprotein</keyword>
<keyword id="KW-1185">Reference proteome</keyword>
<keyword id="KW-0677">Repeat</keyword>
<keyword id="KW-0678">Repressor</keyword>
<keyword id="KW-0949">S-adenosyl-L-methionine</keyword>
<keyword id="KW-0804">Transcription</keyword>
<keyword id="KW-0805">Transcription regulation</keyword>
<keyword id="KW-0808">Transferase</keyword>
<keyword id="KW-0862">Zinc</keyword>
<keyword id="KW-0863">Zinc-finger</keyword>
<protein>
    <recommendedName>
        <fullName>DNA (cytosine-5)-methyltransferase 1</fullName>
        <shortName>Dnmt1</shortName>
        <ecNumber>2.1.1.37</ecNumber>
    </recommendedName>
    <alternativeName>
        <fullName>DNA methyltransferase GgaI</fullName>
        <shortName>DNA MTase GgaI</shortName>
        <shortName>M.GgaI</shortName>
    </alternativeName>
    <alternativeName>
        <fullName>MCMT</fullName>
    </alternativeName>
</protein>